<evidence type="ECO:0000250" key="1">
    <source>
        <dbReference type="UniProtKB" id="P08113"/>
    </source>
</evidence>
<evidence type="ECO:0000250" key="2">
    <source>
        <dbReference type="UniProtKB" id="P14625"/>
    </source>
</evidence>
<evidence type="ECO:0000250" key="3">
    <source>
        <dbReference type="UniProtKB" id="P41148"/>
    </source>
</evidence>
<evidence type="ECO:0000250" key="4">
    <source>
        <dbReference type="UniProtKB" id="Q66HD0"/>
    </source>
</evidence>
<evidence type="ECO:0000255" key="5"/>
<evidence type="ECO:0000256" key="6">
    <source>
        <dbReference type="SAM" id="MobiDB-lite"/>
    </source>
</evidence>
<evidence type="ECO:0000305" key="7"/>
<comment type="function">
    <text evidence="1 2">ATP-dependent chaperone involved in the processing of proteins in the endoplasmic reticulum, regulating their transport. Together with MESD, acts as a modulator of the Wnt pathway by promoting the folding of LRP6, a coreceptor of the canonical Wnt pathway (By similarity). When associated with CNPY3, required for proper folding of Toll-like receptors (By similarity). Promotes folding and trafficking of TLR4 to the cell surface. May participate in the unfolding of cytosolic leaderless cargos (lacking the secretion signal sequence) such as the interleukin 1/IL-1 to facilitate their translocation into the ERGIC (endoplasmic reticulum-Golgi intermediate compartment) and secretion; the translocation process is mediated by the cargo receptor TMED10 (By similarity).</text>
</comment>
<comment type="catalytic activity">
    <reaction evidence="3">
        <text>ATP + H2O = ADP + phosphate + H(+)</text>
        <dbReference type="Rhea" id="RHEA:13065"/>
        <dbReference type="ChEBI" id="CHEBI:15377"/>
        <dbReference type="ChEBI" id="CHEBI:15378"/>
        <dbReference type="ChEBI" id="CHEBI:30616"/>
        <dbReference type="ChEBI" id="CHEBI:43474"/>
        <dbReference type="ChEBI" id="CHEBI:456216"/>
    </reaction>
    <physiologicalReaction direction="left-to-right" evidence="3">
        <dbReference type="Rhea" id="RHEA:13066"/>
    </physiologicalReaction>
</comment>
<comment type="subunit">
    <text evidence="1 2">Homodimer; disulfide-linked. Component of an EIF2 complex at least composed of CELF1/CUGBP1, CALR, CALR3, EIF2S1, EIF2S2, HSP90B1 and HSPA5 (By similarity). Part of a large chaperone multiprotein complex comprising DNAJB11, HSP90B1, HSPA5, HYOU, PDIA2, PDIA4, PDIA6, PPIB, SDF2L1, UGGT1 and very small amounts of ERP29, but not, or at very low levels, CALR nor CANX. Interacts with AIMP1; regulates its retention in the endoplasmic reticulum. Hyperglycosylated form interacts with OS9; promoting its degradation by the endoplasmic reticulum associated degradation (ERAD) (By similarity). Interacts with CNPY3. This interaction is disrupted in the presence of ATP (By similarity). Interacts with TLR4 and TLR9, but not with TLR3 (By similarity). Interacts with MZB1 in a calcium-dependent manner (By similarity). Interacts with METTL23. Interacts with IL1B; the interaction facilitates cargo translocation into the ERGIC. Interacts with EIF2AK3 (By similarity).</text>
</comment>
<comment type="subcellular location">
    <subcellularLocation>
        <location evidence="2">Endoplasmic reticulum lumen</location>
    </subcellularLocation>
    <subcellularLocation>
        <location evidence="3">Sarcoplasmic reticulum lumen</location>
    </subcellularLocation>
    <subcellularLocation>
        <location evidence="2">Melanosome</location>
    </subcellularLocation>
</comment>
<comment type="domain">
    <text evidence="2">The SRT pseudosubstrate motif associates with STT3A during translation in normal conditions, preventing glycosylation of facultative sites until HSP90B1 folding is completed.</text>
</comment>
<comment type="PTM">
    <text evidence="3">Phosphorylated by CK2.</text>
</comment>
<comment type="PTM">
    <text evidence="2">N-glycosylated cotranslationally at Asn-217 by STT3A-containing OST-A complex: this glycosylation is constitutive. In response to various stress, 5 additional facultative sites (Asn-62, Asn-107, Asn-445, Asn-481 and Asn-502) can be glycosylated post-translationally by STT3B-containing OST-B complex, leading to a hyperglycosylated form that is degraded by the ER-associated degradation (ERAD) pathway. In normal conditions, the OST-A complex together with CCDC134 prevent glycosylation at facultative sites during protein folding, thereby preventing hyperglycosylation. Mechanistically, nascent HSP90B1 is tethered during translation to a specialized CCDC134-containing translocon that forms a microenvironment for its folding, in which STT3A associates with the SRT pseudosubstrate motif, and prevents access to facultative glycosylation sites until folding is completed, rendering its facultative sites inaccessible to the OST-B complex.</text>
</comment>
<comment type="similarity">
    <text evidence="7">Belongs to the heat shock protein 90 family.</text>
</comment>
<organism>
    <name type="scientific">Bos taurus</name>
    <name type="common">Bovine</name>
    <dbReference type="NCBI Taxonomy" id="9913"/>
    <lineage>
        <taxon>Eukaryota</taxon>
        <taxon>Metazoa</taxon>
        <taxon>Chordata</taxon>
        <taxon>Craniata</taxon>
        <taxon>Vertebrata</taxon>
        <taxon>Euteleostomi</taxon>
        <taxon>Mammalia</taxon>
        <taxon>Eutheria</taxon>
        <taxon>Laurasiatheria</taxon>
        <taxon>Artiodactyla</taxon>
        <taxon>Ruminantia</taxon>
        <taxon>Pecora</taxon>
        <taxon>Bovidae</taxon>
        <taxon>Bovinae</taxon>
        <taxon>Bos</taxon>
    </lineage>
</organism>
<sequence length="804" mass="92427">MRALWVLGLCCVLLTFGSVRADDEVDVDGTVEEDLGKSREGSRTDDEVVQREEEAIQLDGLNASQIRELREKSEKFAFQAEVNRMMKLIINSLYKNKEIFLRELISNASDALDKIRLISLTDENALAGNEELTVKIKCDKEKNLLHVTDTGVGMTREELVKNLGTIAKSGTSEFLNKMTEAQEDGQSTSELIGQFGVGFYSAFLVADKVIVTSKHNNDTQHIWESDSNEFSVIADPRGNTLGRGTTITLVLKEEASDYLELDTIKNLVKKYSQFINFPIYVWSSKTETVEEPAEEEEAAKEDKEESDDEAAVEEEEDEKKPKTKKVEKTVWDWELMNDIKPIWQRPSKEVEEDEYKAFYKSFSKESDDPMAYIHFTAEGEVTFKSILFVPTSAPRGLFDEYGSKKSDYIKLYVRRVFITDDFHDMMPKYLNFVKGVVDSDDLPLNVSRETLQQHKLLKVIRKKLVRKTLDMIKKIADEKYNDTFWKEFGTNIKLGVIEDHSNRTRLAKLLRFQSSHHPSDMTSLDQYVERMKEKQDKIYFMAGASRKEAESSPFVERLLKKGYEVIYLTEPVDEYCIQALPEFDGKRFQNVAKEGVKFDESEKSKESREAVEKEFEPLLNWMKDKALKDKIEKAVVSQRLTESPCALVASQYGWSGNMERIMKAQAYQTGKDISTNYYASQKKTFEINPRHPLIRDMLRRVKEDEDDKTVSDLAVVLFETATLRSGYLLPDTKAYGDRIERMLRLSLNIDPDAKVEEEPEEEPEETTEDTAEDTEQDEEEEMDAGTDEEEQETAEKSTAEKDEL</sequence>
<keyword id="KW-0007">Acetylation</keyword>
<keyword id="KW-0067">ATP-binding</keyword>
<keyword id="KW-0106">Calcium</keyword>
<keyword id="KW-0143">Chaperone</keyword>
<keyword id="KW-1015">Disulfide bond</keyword>
<keyword id="KW-0256">Endoplasmic reticulum</keyword>
<keyword id="KW-0325">Glycoprotein</keyword>
<keyword id="KW-0378">Hydrolase</keyword>
<keyword id="KW-0379">Hydroxylation</keyword>
<keyword id="KW-0547">Nucleotide-binding</keyword>
<keyword id="KW-0597">Phosphoprotein</keyword>
<keyword id="KW-1185">Reference proteome</keyword>
<keyword id="KW-0703">Sarcoplasmic reticulum</keyword>
<keyword id="KW-0732">Signal</keyword>
<reference key="1">
    <citation type="journal article" date="2001" name="Comp. Biochem. Physiol.">
        <title>Molecular cloning of bovine (Bos taurus) cDNA encoding a 94-kDa glucose-regulated protein and developmental changes in its mRNA and protein content in the mammary gland.</title>
        <authorList>
            <person name="Watanabe A."/>
            <person name="Uchida I."/>
            <person name="Nakata K."/>
            <person name="Fujimoto Y."/>
            <person name="Oikawa S."/>
        </authorList>
    </citation>
    <scope>NUCLEOTIDE SEQUENCE [MRNA]</scope>
    <source>
        <tissue>Mammary gland</tissue>
    </source>
</reference>
<reference key="2">
    <citation type="submission" date="2005-09" db="EMBL/GenBank/DDBJ databases">
        <authorList>
            <consortium name="NIH - Mammalian Gene Collection (MGC) project"/>
        </authorList>
    </citation>
    <scope>NUCLEOTIDE SEQUENCE [LARGE SCALE MRNA]</scope>
    <source>
        <strain>Hereford</strain>
        <tissue>Uterus</tissue>
    </source>
</reference>
<dbReference type="EC" id="3.6.4.-" evidence="3"/>
<dbReference type="EMBL" id="AB025193">
    <property type="protein sequence ID" value="BAB69766.1"/>
    <property type="molecule type" value="mRNA"/>
</dbReference>
<dbReference type="EMBL" id="BC104549">
    <property type="protein sequence ID" value="AAI04550.1"/>
    <property type="molecule type" value="mRNA"/>
</dbReference>
<dbReference type="RefSeq" id="NP_777125.1">
    <property type="nucleotide sequence ID" value="NM_174700.2"/>
</dbReference>
<dbReference type="SMR" id="Q95M18"/>
<dbReference type="FunCoup" id="Q95M18">
    <property type="interactions" value="2559"/>
</dbReference>
<dbReference type="IntAct" id="Q95M18">
    <property type="interactions" value="1"/>
</dbReference>
<dbReference type="STRING" id="9913.ENSBTAP00000004364"/>
<dbReference type="GlyCosmos" id="Q95M18">
    <property type="glycosylation" value="6 sites, No reported glycans"/>
</dbReference>
<dbReference type="GlyGen" id="Q95M18">
    <property type="glycosylation" value="6 sites"/>
</dbReference>
<dbReference type="PaxDb" id="9913-ENSBTAP00000004364"/>
<dbReference type="PeptideAtlas" id="Q95M18"/>
<dbReference type="Ensembl" id="ENSBTAT00000004364.5">
    <property type="protein sequence ID" value="ENSBTAP00000004364.4"/>
    <property type="gene ID" value="ENSBTAG00000003362.5"/>
</dbReference>
<dbReference type="GeneID" id="282646"/>
<dbReference type="KEGG" id="bta:282646"/>
<dbReference type="CTD" id="7184"/>
<dbReference type="VEuPathDB" id="HostDB:ENSBTAG00000003362"/>
<dbReference type="VGNC" id="VGNC:49984">
    <property type="gene designation" value="HSP90B1"/>
</dbReference>
<dbReference type="eggNOG" id="KOG0020">
    <property type="taxonomic scope" value="Eukaryota"/>
</dbReference>
<dbReference type="GeneTree" id="ENSGT01020000230401"/>
<dbReference type="HOGENOM" id="CLU_006684_1_3_1"/>
<dbReference type="InParanoid" id="Q95M18"/>
<dbReference type="OMA" id="YMLQETS"/>
<dbReference type="OrthoDB" id="5426351at2759"/>
<dbReference type="TreeFam" id="TF105969"/>
<dbReference type="Reactome" id="R-BTA-1679131">
    <property type="pathway name" value="Trafficking and processing of endosomal TLR"/>
</dbReference>
<dbReference type="Reactome" id="R-BTA-381426">
    <property type="pathway name" value="Regulation of Insulin-like Growth Factor (IGF) transport and uptake by Insulin-like Growth Factor Binding Proteins (IGFBPs)"/>
</dbReference>
<dbReference type="Reactome" id="R-BTA-6785807">
    <property type="pathway name" value="Interleukin-4 and Interleukin-13 signaling"/>
</dbReference>
<dbReference type="Reactome" id="R-BTA-8957275">
    <property type="pathway name" value="Post-translational protein phosphorylation"/>
</dbReference>
<dbReference type="Proteomes" id="UP000009136">
    <property type="component" value="Chromosome 5"/>
</dbReference>
<dbReference type="Bgee" id="ENSBTAG00000003362">
    <property type="expression patterns" value="Expressed in spermatid and 104 other cell types or tissues"/>
</dbReference>
<dbReference type="GO" id="GO:0005829">
    <property type="term" value="C:cytosol"/>
    <property type="evidence" value="ECO:0000250"/>
    <property type="project" value="AgBase"/>
</dbReference>
<dbReference type="GO" id="GO:0005783">
    <property type="term" value="C:endoplasmic reticulum"/>
    <property type="evidence" value="ECO:0000250"/>
    <property type="project" value="AgBase"/>
</dbReference>
<dbReference type="GO" id="GO:0005789">
    <property type="term" value="C:endoplasmic reticulum membrane"/>
    <property type="evidence" value="ECO:0007669"/>
    <property type="project" value="Ensembl"/>
</dbReference>
<dbReference type="GO" id="GO:0042470">
    <property type="term" value="C:melanosome"/>
    <property type="evidence" value="ECO:0007669"/>
    <property type="project" value="UniProtKB-SubCell"/>
</dbReference>
<dbReference type="GO" id="GO:0030496">
    <property type="term" value="C:midbody"/>
    <property type="evidence" value="ECO:0007669"/>
    <property type="project" value="Ensembl"/>
</dbReference>
<dbReference type="GO" id="GO:0048471">
    <property type="term" value="C:perinuclear region of cytoplasm"/>
    <property type="evidence" value="ECO:0000250"/>
    <property type="project" value="AgBase"/>
</dbReference>
<dbReference type="GO" id="GO:0032991">
    <property type="term" value="C:protein-containing complex"/>
    <property type="evidence" value="ECO:0007669"/>
    <property type="project" value="Ensembl"/>
</dbReference>
<dbReference type="GO" id="GO:0033018">
    <property type="term" value="C:sarcoplasmic reticulum lumen"/>
    <property type="evidence" value="ECO:0007669"/>
    <property type="project" value="UniProtKB-SubCell"/>
</dbReference>
<dbReference type="GO" id="GO:0005524">
    <property type="term" value="F:ATP binding"/>
    <property type="evidence" value="ECO:0000318"/>
    <property type="project" value="GO_Central"/>
</dbReference>
<dbReference type="GO" id="GO:0016887">
    <property type="term" value="F:ATP hydrolysis activity"/>
    <property type="evidence" value="ECO:0000318"/>
    <property type="project" value="GO_Central"/>
</dbReference>
<dbReference type="GO" id="GO:0140662">
    <property type="term" value="F:ATP-dependent protein folding chaperone"/>
    <property type="evidence" value="ECO:0007669"/>
    <property type="project" value="Ensembl"/>
</dbReference>
<dbReference type="GO" id="GO:0050750">
    <property type="term" value="F:low-density lipoprotein particle receptor binding"/>
    <property type="evidence" value="ECO:0000250"/>
    <property type="project" value="AgBase"/>
</dbReference>
<dbReference type="GO" id="GO:0019903">
    <property type="term" value="F:protein phosphatase binding"/>
    <property type="evidence" value="ECO:0007669"/>
    <property type="project" value="Ensembl"/>
</dbReference>
<dbReference type="GO" id="GO:0004864">
    <property type="term" value="F:protein phosphatase inhibitor activity"/>
    <property type="evidence" value="ECO:0007669"/>
    <property type="project" value="Ensembl"/>
</dbReference>
<dbReference type="GO" id="GO:0003723">
    <property type="term" value="F:RNA binding"/>
    <property type="evidence" value="ECO:0000250"/>
    <property type="project" value="AgBase"/>
</dbReference>
<dbReference type="GO" id="GO:0051082">
    <property type="term" value="F:unfolded protein binding"/>
    <property type="evidence" value="ECO:0000318"/>
    <property type="project" value="GO_Central"/>
</dbReference>
<dbReference type="GO" id="GO:0031247">
    <property type="term" value="P:actin rod assembly"/>
    <property type="evidence" value="ECO:0007669"/>
    <property type="project" value="Ensembl"/>
</dbReference>
<dbReference type="GO" id="GO:0071318">
    <property type="term" value="P:cellular response to ATP"/>
    <property type="evidence" value="ECO:0007669"/>
    <property type="project" value="Ensembl"/>
</dbReference>
<dbReference type="GO" id="GO:0036503">
    <property type="term" value="P:ERAD pathway"/>
    <property type="evidence" value="ECO:0000250"/>
    <property type="project" value="UniProtKB"/>
</dbReference>
<dbReference type="GO" id="GO:0043066">
    <property type="term" value="P:negative regulation of apoptotic process"/>
    <property type="evidence" value="ECO:0000250"/>
    <property type="project" value="AgBase"/>
</dbReference>
<dbReference type="GO" id="GO:0034123">
    <property type="term" value="P:positive regulation of toll-like receptor signaling pathway"/>
    <property type="evidence" value="ECO:0007669"/>
    <property type="project" value="Ensembl"/>
</dbReference>
<dbReference type="GO" id="GO:0030177">
    <property type="term" value="P:positive regulation of Wnt signaling pathway"/>
    <property type="evidence" value="ECO:0007669"/>
    <property type="project" value="Ensembl"/>
</dbReference>
<dbReference type="GO" id="GO:0006457">
    <property type="term" value="P:protein folding"/>
    <property type="evidence" value="ECO:0000318"/>
    <property type="project" value="GO_Central"/>
</dbReference>
<dbReference type="GO" id="GO:0072659">
    <property type="term" value="P:protein localization to plasma membrane"/>
    <property type="evidence" value="ECO:0007669"/>
    <property type="project" value="Ensembl"/>
</dbReference>
<dbReference type="GO" id="GO:0001666">
    <property type="term" value="P:response to hypoxia"/>
    <property type="evidence" value="ECO:0000250"/>
    <property type="project" value="AgBase"/>
</dbReference>
<dbReference type="GO" id="GO:0030970">
    <property type="term" value="P:retrograde protein transport, ER to cytosol"/>
    <property type="evidence" value="ECO:0007669"/>
    <property type="project" value="Ensembl"/>
</dbReference>
<dbReference type="CDD" id="cd16927">
    <property type="entry name" value="HATPase_Hsp90-like"/>
    <property type="match status" value="1"/>
</dbReference>
<dbReference type="FunFam" id="3.30.230.80:FF:000003">
    <property type="entry name" value="endoplasmin isoform X1"/>
    <property type="match status" value="1"/>
</dbReference>
<dbReference type="FunFam" id="1.20.120.790:FF:000003">
    <property type="entry name" value="Heat shock protein 90"/>
    <property type="match status" value="1"/>
</dbReference>
<dbReference type="FunFam" id="3.30.565.10:FF:000005">
    <property type="entry name" value="Heat shock protein 90"/>
    <property type="match status" value="1"/>
</dbReference>
<dbReference type="FunFam" id="3.40.50.11260:FF:000003">
    <property type="entry name" value="Heat shock protein 90"/>
    <property type="match status" value="1"/>
</dbReference>
<dbReference type="Gene3D" id="3.30.230.80">
    <property type="match status" value="1"/>
</dbReference>
<dbReference type="Gene3D" id="3.40.50.11260">
    <property type="match status" value="1"/>
</dbReference>
<dbReference type="Gene3D" id="1.20.120.790">
    <property type="entry name" value="Heat shock protein 90, C-terminal domain"/>
    <property type="match status" value="1"/>
</dbReference>
<dbReference type="Gene3D" id="3.30.565.10">
    <property type="entry name" value="Histidine kinase-like ATPase, C-terminal domain"/>
    <property type="match status" value="1"/>
</dbReference>
<dbReference type="HAMAP" id="MF_00505">
    <property type="entry name" value="HSP90"/>
    <property type="match status" value="1"/>
</dbReference>
<dbReference type="InterPro" id="IPR036890">
    <property type="entry name" value="HATPase_C_sf"/>
</dbReference>
<dbReference type="InterPro" id="IPR019805">
    <property type="entry name" value="Heat_shock_protein_90_CS"/>
</dbReference>
<dbReference type="InterPro" id="IPR037196">
    <property type="entry name" value="HSP90_C"/>
</dbReference>
<dbReference type="InterPro" id="IPR001404">
    <property type="entry name" value="Hsp90_fam"/>
</dbReference>
<dbReference type="InterPro" id="IPR020575">
    <property type="entry name" value="Hsp90_N"/>
</dbReference>
<dbReference type="InterPro" id="IPR020568">
    <property type="entry name" value="Ribosomal_Su5_D2-typ_SF"/>
</dbReference>
<dbReference type="NCBIfam" id="NF003555">
    <property type="entry name" value="PRK05218.1"/>
    <property type="match status" value="1"/>
</dbReference>
<dbReference type="PANTHER" id="PTHR11528">
    <property type="entry name" value="HEAT SHOCK PROTEIN 90 FAMILY MEMBER"/>
    <property type="match status" value="1"/>
</dbReference>
<dbReference type="Pfam" id="PF13589">
    <property type="entry name" value="HATPase_c_3"/>
    <property type="match status" value="1"/>
</dbReference>
<dbReference type="Pfam" id="PF00183">
    <property type="entry name" value="HSP90"/>
    <property type="match status" value="1"/>
</dbReference>
<dbReference type="PIRSF" id="PIRSF002583">
    <property type="entry name" value="Hsp90"/>
    <property type="match status" value="1"/>
</dbReference>
<dbReference type="PRINTS" id="PR00775">
    <property type="entry name" value="HEATSHOCK90"/>
</dbReference>
<dbReference type="SMART" id="SM00387">
    <property type="entry name" value="HATPase_c"/>
    <property type="match status" value="1"/>
</dbReference>
<dbReference type="SUPFAM" id="SSF55874">
    <property type="entry name" value="ATPase domain of HSP90 chaperone/DNA topoisomerase II/histidine kinase"/>
    <property type="match status" value="1"/>
</dbReference>
<dbReference type="SUPFAM" id="SSF110942">
    <property type="entry name" value="HSP90 C-terminal domain"/>
    <property type="match status" value="1"/>
</dbReference>
<dbReference type="SUPFAM" id="SSF54211">
    <property type="entry name" value="Ribosomal protein S5 domain 2-like"/>
    <property type="match status" value="1"/>
</dbReference>
<dbReference type="PROSITE" id="PS00014">
    <property type="entry name" value="ER_TARGET"/>
    <property type="match status" value="1"/>
</dbReference>
<dbReference type="PROSITE" id="PS00298">
    <property type="entry name" value="HSP90"/>
    <property type="match status" value="1"/>
</dbReference>
<accession>Q95M18</accession>
<accession>Q3MHX8</accession>
<gene>
    <name type="primary">HSP90B1</name>
    <name type="synonym">GRP94</name>
    <name evidence="2" type="synonym">HSPC4</name>
    <name type="synonym">TRA1</name>
</gene>
<name>ENPL_BOVIN</name>
<protein>
    <recommendedName>
        <fullName>Endoplasmin</fullName>
        <ecNumber evidence="3">3.6.4.-</ecNumber>
    </recommendedName>
    <alternativeName>
        <fullName>94 kDa glucose-regulated protein</fullName>
        <shortName>GRP-94</shortName>
    </alternativeName>
    <alternativeName>
        <fullName>Heat shock protein 90 kDa beta member 1</fullName>
    </alternativeName>
</protein>
<proteinExistence type="evidence at transcript level"/>
<feature type="signal peptide" evidence="5">
    <location>
        <begin position="1"/>
        <end position="21"/>
    </location>
</feature>
<feature type="chain" id="PRO_0000013596" description="Endoplasmin">
    <location>
        <begin position="22"/>
        <end position="804"/>
    </location>
</feature>
<feature type="region of interest" description="Disordered" evidence="6">
    <location>
        <begin position="288"/>
        <end position="323"/>
    </location>
</feature>
<feature type="region of interest" description="Disordered" evidence="6">
    <location>
        <begin position="750"/>
        <end position="804"/>
    </location>
</feature>
<feature type="short sequence motif" description="SRT pseudosubstrate motif" evidence="2">
    <location>
        <begin position="42"/>
        <end position="44"/>
    </location>
</feature>
<feature type="short sequence motif" description="Prevents secretion from ER" evidence="5">
    <location>
        <begin position="801"/>
        <end position="804"/>
    </location>
</feature>
<feature type="compositionally biased region" description="Acidic residues" evidence="6">
    <location>
        <begin position="289"/>
        <end position="317"/>
    </location>
</feature>
<feature type="compositionally biased region" description="Acidic residues" evidence="6">
    <location>
        <begin position="757"/>
        <end position="792"/>
    </location>
</feature>
<feature type="compositionally biased region" description="Basic and acidic residues" evidence="6">
    <location>
        <begin position="793"/>
        <end position="804"/>
    </location>
</feature>
<feature type="binding site" evidence="3">
    <location>
        <position position="107"/>
    </location>
    <ligand>
        <name>ATP</name>
        <dbReference type="ChEBI" id="CHEBI:30616"/>
    </ligand>
</feature>
<feature type="binding site" evidence="3">
    <location>
        <position position="149"/>
    </location>
    <ligand>
        <name>ATP</name>
        <dbReference type="ChEBI" id="CHEBI:30616"/>
    </ligand>
</feature>
<feature type="binding site" evidence="3">
    <location>
        <position position="162"/>
    </location>
    <ligand>
        <name>ATP</name>
        <dbReference type="ChEBI" id="CHEBI:30616"/>
    </ligand>
</feature>
<feature type="binding site" evidence="3">
    <location>
        <position position="199"/>
    </location>
    <ligand>
        <name>ATP</name>
        <dbReference type="ChEBI" id="CHEBI:30616"/>
    </ligand>
</feature>
<feature type="site" description="Important for ATP hydrolysis" evidence="3">
    <location>
        <position position="448"/>
    </location>
</feature>
<feature type="modified residue" description="Phosphoserine" evidence="2">
    <location>
        <position position="64"/>
    </location>
</feature>
<feature type="modified residue" description="N6-(2-hydroxyisobutyryl)lysine" evidence="2">
    <location>
        <position position="168"/>
    </location>
</feature>
<feature type="modified residue" description="Phosphoserine" evidence="4">
    <location>
        <position position="172"/>
    </location>
</feature>
<feature type="modified residue" description="Phosphoserine" evidence="2">
    <location>
        <position position="306"/>
    </location>
</feature>
<feature type="modified residue" description="Phosphoserine" evidence="4">
    <location>
        <position position="403"/>
    </location>
</feature>
<feature type="modified residue" description="N6-succinyllysine" evidence="1">
    <location>
        <position position="404"/>
    </location>
</feature>
<feature type="modified residue" description="Phosphoserine" evidence="2">
    <location>
        <position position="447"/>
    </location>
</feature>
<feature type="modified residue" description="N6-acetyllysine" evidence="1">
    <location>
        <position position="479"/>
    </location>
</feature>
<feature type="modified residue" description="N6-succinyllysine" evidence="1">
    <location>
        <position position="633"/>
    </location>
</feature>
<feature type="modified residue" description="Phosphothreonine" evidence="2">
    <location>
        <position position="786"/>
    </location>
</feature>
<feature type="glycosylation site" description="N-linked (GlcNAc...) asparagine" evidence="5">
    <location>
        <position position="62"/>
    </location>
</feature>
<feature type="glycosylation site" description="N-linked (GlcNAc...) asparagine" evidence="5">
    <location>
        <position position="107"/>
    </location>
</feature>
<feature type="glycosylation site" description="N-linked (GlcNAc...) asparagine" evidence="5">
    <location>
        <position position="217"/>
    </location>
</feature>
<feature type="glycosylation site" description="N-linked (GlcNAc...) asparagine" evidence="5">
    <location>
        <position position="445"/>
    </location>
</feature>
<feature type="glycosylation site" description="N-linked (GlcNAc...) asparagine" evidence="5">
    <location>
        <position position="481"/>
    </location>
</feature>
<feature type="glycosylation site" description="N-linked (GlcNAc...) asparagine" evidence="5">
    <location>
        <position position="502"/>
    </location>
</feature>
<feature type="disulfide bond" description="Interchain" evidence="1">
    <location>
        <position position="138"/>
    </location>
</feature>